<comment type="function">
    <text evidence="1">Catalyzes the stereoinversion of LL-2,6-diaminopimelate (L,L-DAP) to meso-diaminopimelate (meso-DAP), a precursor of L-lysine.</text>
</comment>
<comment type="catalytic activity">
    <reaction evidence="1">
        <text>(2S,6S)-2,6-diaminopimelate = meso-2,6-diaminopimelate</text>
        <dbReference type="Rhea" id="RHEA:15393"/>
        <dbReference type="ChEBI" id="CHEBI:57609"/>
        <dbReference type="ChEBI" id="CHEBI:57791"/>
        <dbReference type="EC" id="5.1.1.7"/>
    </reaction>
</comment>
<comment type="pathway">
    <text evidence="1">Amino-acid biosynthesis; L-lysine biosynthesis via DAP pathway; DL-2,6-diaminopimelate from LL-2,6-diaminopimelate: step 1/1.</text>
</comment>
<comment type="subunit">
    <text evidence="1">Homodimer.</text>
</comment>
<comment type="subcellular location">
    <subcellularLocation>
        <location evidence="1">Cytoplasm</location>
    </subcellularLocation>
</comment>
<comment type="similarity">
    <text evidence="1">Belongs to the diaminopimelate epimerase family.</text>
</comment>
<reference key="1">
    <citation type="submission" date="2007-03" db="EMBL/GenBank/DDBJ databases">
        <title>Complete sequence of chromosome of Methanococcus maripaludis C5.</title>
        <authorList>
            <consortium name="US DOE Joint Genome Institute"/>
            <person name="Copeland A."/>
            <person name="Lucas S."/>
            <person name="Lapidus A."/>
            <person name="Barry K."/>
            <person name="Glavina del Rio T."/>
            <person name="Dalin E."/>
            <person name="Tice H."/>
            <person name="Pitluck S."/>
            <person name="Chertkov O."/>
            <person name="Brettin T."/>
            <person name="Bruce D."/>
            <person name="Han C."/>
            <person name="Detter J.C."/>
            <person name="Schmutz J."/>
            <person name="Larimer F."/>
            <person name="Land M."/>
            <person name="Hauser L."/>
            <person name="Kyrpides N."/>
            <person name="Mikhailova N."/>
            <person name="Sieprawska-Lupa M."/>
            <person name="Whitman W.B."/>
            <person name="Richardson P."/>
        </authorList>
    </citation>
    <scope>NUCLEOTIDE SEQUENCE [LARGE SCALE GENOMIC DNA]</scope>
    <source>
        <strain>C5 / ATCC BAA-1333</strain>
    </source>
</reference>
<sequence length="277" mass="30689">MKFTKMHGLGNDYIYVDAISQKIENPNEISKFVSDRHFGIGSDGLVLILPSDVADFKMRMFNSDGSEAEMCGNAIRCVGKFVYDKKMTDKSTISIETLAGIKVLEMTVENGKVVLVKVDMGEPILKAETIPVLSEKHPVIDEEITAKDYCYNFTCVSMGNPHAITYIENVEEFPLEKIGPLFEVHEKFPKKTNVEFVELIDDSTVKMRVWERGAGETLACGTGACAVLTASVLKGYVGRKATVKLLGGDLIIEWNEKDNHIYMTGPATTVFEGEIDI</sequence>
<accession>A4FXV0</accession>
<organism>
    <name type="scientific">Methanococcus maripaludis (strain C5 / ATCC BAA-1333)</name>
    <dbReference type="NCBI Taxonomy" id="402880"/>
    <lineage>
        <taxon>Archaea</taxon>
        <taxon>Methanobacteriati</taxon>
        <taxon>Methanobacteriota</taxon>
        <taxon>Methanomada group</taxon>
        <taxon>Methanococci</taxon>
        <taxon>Methanococcales</taxon>
        <taxon>Methanococcaceae</taxon>
        <taxon>Methanococcus</taxon>
    </lineage>
</organism>
<evidence type="ECO:0000255" key="1">
    <source>
        <dbReference type="HAMAP-Rule" id="MF_00197"/>
    </source>
</evidence>
<dbReference type="EC" id="5.1.1.7" evidence="1"/>
<dbReference type="EMBL" id="CP000609">
    <property type="protein sequence ID" value="ABO35034.1"/>
    <property type="molecule type" value="Genomic_DNA"/>
</dbReference>
<dbReference type="RefSeq" id="WP_011868488.1">
    <property type="nucleotide sequence ID" value="NC_009135.1"/>
</dbReference>
<dbReference type="SMR" id="A4FXV0"/>
<dbReference type="STRING" id="402880.MmarC5_0724"/>
<dbReference type="GeneID" id="4928508"/>
<dbReference type="KEGG" id="mmq:MmarC5_0724"/>
<dbReference type="eggNOG" id="arCOG02255">
    <property type="taxonomic scope" value="Archaea"/>
</dbReference>
<dbReference type="HOGENOM" id="CLU_053306_3_0_2"/>
<dbReference type="OrthoDB" id="358699at2157"/>
<dbReference type="UniPathway" id="UPA00034">
    <property type="reaction ID" value="UER00025"/>
</dbReference>
<dbReference type="Proteomes" id="UP000000253">
    <property type="component" value="Chromosome"/>
</dbReference>
<dbReference type="GO" id="GO:0005829">
    <property type="term" value="C:cytosol"/>
    <property type="evidence" value="ECO:0007669"/>
    <property type="project" value="TreeGrafter"/>
</dbReference>
<dbReference type="GO" id="GO:0008837">
    <property type="term" value="F:diaminopimelate epimerase activity"/>
    <property type="evidence" value="ECO:0007669"/>
    <property type="project" value="UniProtKB-UniRule"/>
</dbReference>
<dbReference type="GO" id="GO:0009089">
    <property type="term" value="P:lysine biosynthetic process via diaminopimelate"/>
    <property type="evidence" value="ECO:0007669"/>
    <property type="project" value="UniProtKB-UniRule"/>
</dbReference>
<dbReference type="FunFam" id="3.10.310.10:FF:000001">
    <property type="entry name" value="Diaminopimelate epimerase"/>
    <property type="match status" value="1"/>
</dbReference>
<dbReference type="FunFam" id="3.10.310.10:FF:000004">
    <property type="entry name" value="Diaminopimelate epimerase"/>
    <property type="match status" value="1"/>
</dbReference>
<dbReference type="Gene3D" id="3.10.310.10">
    <property type="entry name" value="Diaminopimelate Epimerase, Chain A, domain 1"/>
    <property type="match status" value="2"/>
</dbReference>
<dbReference type="HAMAP" id="MF_00197">
    <property type="entry name" value="DAP_epimerase"/>
    <property type="match status" value="1"/>
</dbReference>
<dbReference type="InterPro" id="IPR018510">
    <property type="entry name" value="DAP_epimerase_AS"/>
</dbReference>
<dbReference type="InterPro" id="IPR001653">
    <property type="entry name" value="DAP_epimerase_DapF"/>
</dbReference>
<dbReference type="NCBIfam" id="TIGR00652">
    <property type="entry name" value="DapF"/>
    <property type="match status" value="1"/>
</dbReference>
<dbReference type="PANTHER" id="PTHR31689:SF0">
    <property type="entry name" value="DIAMINOPIMELATE EPIMERASE"/>
    <property type="match status" value="1"/>
</dbReference>
<dbReference type="PANTHER" id="PTHR31689">
    <property type="entry name" value="DIAMINOPIMELATE EPIMERASE, CHLOROPLASTIC"/>
    <property type="match status" value="1"/>
</dbReference>
<dbReference type="Pfam" id="PF01678">
    <property type="entry name" value="DAP_epimerase"/>
    <property type="match status" value="2"/>
</dbReference>
<dbReference type="SUPFAM" id="SSF54506">
    <property type="entry name" value="Diaminopimelate epimerase-like"/>
    <property type="match status" value="2"/>
</dbReference>
<dbReference type="PROSITE" id="PS01326">
    <property type="entry name" value="DAP_EPIMERASE"/>
    <property type="match status" value="1"/>
</dbReference>
<proteinExistence type="inferred from homology"/>
<protein>
    <recommendedName>
        <fullName evidence="1">Diaminopimelate epimerase</fullName>
        <shortName evidence="1">DAP epimerase</shortName>
        <ecNumber evidence="1">5.1.1.7</ecNumber>
    </recommendedName>
    <alternativeName>
        <fullName evidence="1">PLP-independent amino acid racemase</fullName>
    </alternativeName>
</protein>
<gene>
    <name evidence="1" type="primary">dapF</name>
    <name type="ordered locus">MmarC5_0724</name>
</gene>
<name>DAPF_METM5</name>
<feature type="chain" id="PRO_1000124421" description="Diaminopimelate epimerase">
    <location>
        <begin position="1"/>
        <end position="277"/>
    </location>
</feature>
<feature type="active site" description="Proton donor" evidence="1">
    <location>
        <position position="71"/>
    </location>
</feature>
<feature type="active site" description="Proton acceptor" evidence="1">
    <location>
        <position position="220"/>
    </location>
</feature>
<feature type="binding site" evidence="1">
    <location>
        <position position="11"/>
    </location>
    <ligand>
        <name>substrate</name>
    </ligand>
</feature>
<feature type="binding site" evidence="1">
    <location>
        <position position="62"/>
    </location>
    <ligand>
        <name>substrate</name>
    </ligand>
</feature>
<feature type="binding site" evidence="1">
    <location>
        <begin position="72"/>
        <end position="73"/>
    </location>
    <ligand>
        <name>substrate</name>
    </ligand>
</feature>
<feature type="binding site" evidence="1">
    <location>
        <position position="160"/>
    </location>
    <ligand>
        <name>substrate</name>
    </ligand>
</feature>
<feature type="binding site" evidence="1">
    <location>
        <position position="193"/>
    </location>
    <ligand>
        <name>substrate</name>
    </ligand>
</feature>
<feature type="binding site" evidence="1">
    <location>
        <begin position="211"/>
        <end position="212"/>
    </location>
    <ligand>
        <name>substrate</name>
    </ligand>
</feature>
<feature type="binding site" evidence="1">
    <location>
        <begin position="221"/>
        <end position="222"/>
    </location>
    <ligand>
        <name>substrate</name>
    </ligand>
</feature>
<feature type="site" description="Could be important to modulate the pK values of the two catalytic cysteine residues" evidence="1">
    <location>
        <position position="162"/>
    </location>
</feature>
<feature type="site" description="Could be important to modulate the pK values of the two catalytic cysteine residues" evidence="1">
    <location>
        <position position="211"/>
    </location>
</feature>
<keyword id="KW-0028">Amino-acid biosynthesis</keyword>
<keyword id="KW-0963">Cytoplasm</keyword>
<keyword id="KW-0413">Isomerase</keyword>
<keyword id="KW-0457">Lysine biosynthesis</keyword>